<protein>
    <recommendedName>
        <fullName evidence="1">Arginine--tRNA ligase</fullName>
        <ecNumber evidence="1">6.1.1.19</ecNumber>
    </recommendedName>
    <alternativeName>
        <fullName evidence="1">Arginyl-tRNA synthetase</fullName>
        <shortName evidence="1">ArgRS</shortName>
    </alternativeName>
</protein>
<organism>
    <name type="scientific">Levilactobacillus brevis (strain ATCC 367 / BCRC 12310 / CIP 105137 / JCM 1170 / LMG 11437 / NCIMB 947 / NCTC 947)</name>
    <name type="common">Lactobacillus brevis</name>
    <dbReference type="NCBI Taxonomy" id="387344"/>
    <lineage>
        <taxon>Bacteria</taxon>
        <taxon>Bacillati</taxon>
        <taxon>Bacillota</taxon>
        <taxon>Bacilli</taxon>
        <taxon>Lactobacillales</taxon>
        <taxon>Lactobacillaceae</taxon>
        <taxon>Levilactobacillus</taxon>
    </lineage>
</organism>
<accession>Q03QD4</accession>
<dbReference type="EC" id="6.1.1.19" evidence="1"/>
<dbReference type="EMBL" id="CP000416">
    <property type="protein sequence ID" value="ABJ64588.1"/>
    <property type="molecule type" value="Genomic_DNA"/>
</dbReference>
<dbReference type="RefSeq" id="WP_011668216.1">
    <property type="nucleotide sequence ID" value="NC_008497.1"/>
</dbReference>
<dbReference type="SMR" id="Q03QD4"/>
<dbReference type="STRING" id="387344.LVIS_1491"/>
<dbReference type="KEGG" id="lbr:LVIS_1491"/>
<dbReference type="eggNOG" id="COG0018">
    <property type="taxonomic scope" value="Bacteria"/>
</dbReference>
<dbReference type="HOGENOM" id="CLU_006406_6_1_9"/>
<dbReference type="Proteomes" id="UP000001652">
    <property type="component" value="Chromosome"/>
</dbReference>
<dbReference type="GO" id="GO:0005737">
    <property type="term" value="C:cytoplasm"/>
    <property type="evidence" value="ECO:0007669"/>
    <property type="project" value="UniProtKB-SubCell"/>
</dbReference>
<dbReference type="GO" id="GO:0004814">
    <property type="term" value="F:arginine-tRNA ligase activity"/>
    <property type="evidence" value="ECO:0007669"/>
    <property type="project" value="UniProtKB-UniRule"/>
</dbReference>
<dbReference type="GO" id="GO:0005524">
    <property type="term" value="F:ATP binding"/>
    <property type="evidence" value="ECO:0007669"/>
    <property type="project" value="UniProtKB-UniRule"/>
</dbReference>
<dbReference type="GO" id="GO:0006420">
    <property type="term" value="P:arginyl-tRNA aminoacylation"/>
    <property type="evidence" value="ECO:0007669"/>
    <property type="project" value="UniProtKB-UniRule"/>
</dbReference>
<dbReference type="CDD" id="cd07956">
    <property type="entry name" value="Anticodon_Ia_Arg"/>
    <property type="match status" value="1"/>
</dbReference>
<dbReference type="CDD" id="cd00671">
    <property type="entry name" value="ArgRS_core"/>
    <property type="match status" value="1"/>
</dbReference>
<dbReference type="FunFam" id="3.40.50.620:FF:000116">
    <property type="entry name" value="Arginine--tRNA ligase"/>
    <property type="match status" value="1"/>
</dbReference>
<dbReference type="FunFam" id="1.10.730.10:FF:000006">
    <property type="entry name" value="Arginyl-tRNA synthetase 2, mitochondrial"/>
    <property type="match status" value="1"/>
</dbReference>
<dbReference type="Gene3D" id="3.30.1360.70">
    <property type="entry name" value="Arginyl tRNA synthetase N-terminal domain"/>
    <property type="match status" value="1"/>
</dbReference>
<dbReference type="Gene3D" id="3.40.50.620">
    <property type="entry name" value="HUPs"/>
    <property type="match status" value="1"/>
</dbReference>
<dbReference type="Gene3D" id="1.10.730.10">
    <property type="entry name" value="Isoleucyl-tRNA Synthetase, Domain 1"/>
    <property type="match status" value="1"/>
</dbReference>
<dbReference type="HAMAP" id="MF_00123">
    <property type="entry name" value="Arg_tRNA_synth"/>
    <property type="match status" value="1"/>
</dbReference>
<dbReference type="InterPro" id="IPR001278">
    <property type="entry name" value="Arg-tRNA-ligase"/>
</dbReference>
<dbReference type="InterPro" id="IPR005148">
    <property type="entry name" value="Arg-tRNA-synth_N"/>
</dbReference>
<dbReference type="InterPro" id="IPR036695">
    <property type="entry name" value="Arg-tRNA-synth_N_sf"/>
</dbReference>
<dbReference type="InterPro" id="IPR035684">
    <property type="entry name" value="ArgRS_core"/>
</dbReference>
<dbReference type="InterPro" id="IPR008909">
    <property type="entry name" value="DALR_anticod-bd"/>
</dbReference>
<dbReference type="InterPro" id="IPR014729">
    <property type="entry name" value="Rossmann-like_a/b/a_fold"/>
</dbReference>
<dbReference type="InterPro" id="IPR009080">
    <property type="entry name" value="tRNAsynth_Ia_anticodon-bd"/>
</dbReference>
<dbReference type="NCBIfam" id="TIGR00456">
    <property type="entry name" value="argS"/>
    <property type="match status" value="1"/>
</dbReference>
<dbReference type="PANTHER" id="PTHR11956:SF5">
    <property type="entry name" value="ARGININE--TRNA LIGASE, CYTOPLASMIC"/>
    <property type="match status" value="1"/>
</dbReference>
<dbReference type="PANTHER" id="PTHR11956">
    <property type="entry name" value="ARGINYL-TRNA SYNTHETASE"/>
    <property type="match status" value="1"/>
</dbReference>
<dbReference type="Pfam" id="PF03485">
    <property type="entry name" value="Arg_tRNA_synt_N"/>
    <property type="match status" value="1"/>
</dbReference>
<dbReference type="Pfam" id="PF05746">
    <property type="entry name" value="DALR_1"/>
    <property type="match status" value="1"/>
</dbReference>
<dbReference type="Pfam" id="PF00750">
    <property type="entry name" value="tRNA-synt_1d"/>
    <property type="match status" value="1"/>
</dbReference>
<dbReference type="PRINTS" id="PR01038">
    <property type="entry name" value="TRNASYNTHARG"/>
</dbReference>
<dbReference type="SMART" id="SM01016">
    <property type="entry name" value="Arg_tRNA_synt_N"/>
    <property type="match status" value="1"/>
</dbReference>
<dbReference type="SMART" id="SM00836">
    <property type="entry name" value="DALR_1"/>
    <property type="match status" value="1"/>
</dbReference>
<dbReference type="SUPFAM" id="SSF47323">
    <property type="entry name" value="Anticodon-binding domain of a subclass of class I aminoacyl-tRNA synthetases"/>
    <property type="match status" value="1"/>
</dbReference>
<dbReference type="SUPFAM" id="SSF55190">
    <property type="entry name" value="Arginyl-tRNA synthetase (ArgRS), N-terminal 'additional' domain"/>
    <property type="match status" value="1"/>
</dbReference>
<dbReference type="SUPFAM" id="SSF52374">
    <property type="entry name" value="Nucleotidylyl transferase"/>
    <property type="match status" value="1"/>
</dbReference>
<name>SYR_LEVBA</name>
<evidence type="ECO:0000255" key="1">
    <source>
        <dbReference type="HAMAP-Rule" id="MF_00123"/>
    </source>
</evidence>
<gene>
    <name evidence="1" type="primary">argS</name>
    <name type="ordered locus">LVIS_1491</name>
</gene>
<sequence length="563" mass="62843">MDYKQIVTAALSDALAGQLTRDEIASKLERPKTSDKGDMAFPTFTLAKLLHQAPQQIAQDLAEKLDKTSFEKVEVVGPYLNFFFDKGAYSAETLQTVLTAGADYGQNDDGQGGNVPIDMSSPNIAKPMSMGHLRSTVIGNSIAEILTKNGYHPIKDNHLGDWGTQFGKLITAYKLWGNEADVKADPINKLVEYYVRFHKEDVDKPELDDTAREWFRKLENGDEEAHELWQWFRDASLQEFNDVYEKLGVTFDTFNGEAFYNDKLEEVVQILKDKNLLVESQGAQVVDLSKYNLNPALILKSDGASLYITRDIATALYRDRTYHPAKNLYVVGSEQTYYFKQLKAVLQEMGVPSADDLEHIPFGLITVDGKKLSTRSGRIILLAKVLDDSVKLAAEEINEKNPDLANKDEVAQQVGVGAIVFGDLKNERTNNIDFVLADQLKFEGETGPYVQYSHARAESILRKAGKVTITTDGNQISDPEAWDTIKTLADFPAMVKMACDEFEPSVIAKYAIRLAKTFNKYYAHSKILTEDAELPARLALVKAVSTVLKESLRLLGVQAPDEM</sequence>
<proteinExistence type="inferred from homology"/>
<reference key="1">
    <citation type="journal article" date="2006" name="Proc. Natl. Acad. Sci. U.S.A.">
        <title>Comparative genomics of the lactic acid bacteria.</title>
        <authorList>
            <person name="Makarova K.S."/>
            <person name="Slesarev A."/>
            <person name="Wolf Y.I."/>
            <person name="Sorokin A."/>
            <person name="Mirkin B."/>
            <person name="Koonin E.V."/>
            <person name="Pavlov A."/>
            <person name="Pavlova N."/>
            <person name="Karamychev V."/>
            <person name="Polouchine N."/>
            <person name="Shakhova V."/>
            <person name="Grigoriev I."/>
            <person name="Lou Y."/>
            <person name="Rohksar D."/>
            <person name="Lucas S."/>
            <person name="Huang K."/>
            <person name="Goodstein D.M."/>
            <person name="Hawkins T."/>
            <person name="Plengvidhya V."/>
            <person name="Welker D."/>
            <person name="Hughes J."/>
            <person name="Goh Y."/>
            <person name="Benson A."/>
            <person name="Baldwin K."/>
            <person name="Lee J.-H."/>
            <person name="Diaz-Muniz I."/>
            <person name="Dosti B."/>
            <person name="Smeianov V."/>
            <person name="Wechter W."/>
            <person name="Barabote R."/>
            <person name="Lorca G."/>
            <person name="Altermann E."/>
            <person name="Barrangou R."/>
            <person name="Ganesan B."/>
            <person name="Xie Y."/>
            <person name="Rawsthorne H."/>
            <person name="Tamir D."/>
            <person name="Parker C."/>
            <person name="Breidt F."/>
            <person name="Broadbent J.R."/>
            <person name="Hutkins R."/>
            <person name="O'Sullivan D."/>
            <person name="Steele J."/>
            <person name="Unlu G."/>
            <person name="Saier M.H. Jr."/>
            <person name="Klaenhammer T."/>
            <person name="Richardson P."/>
            <person name="Kozyavkin S."/>
            <person name="Weimer B.C."/>
            <person name="Mills D.A."/>
        </authorList>
    </citation>
    <scope>NUCLEOTIDE SEQUENCE [LARGE SCALE GENOMIC DNA]</scope>
    <source>
        <strain>ATCC 367 / BCRC 12310 / CIP 105137 / JCM 1170 / LMG 11437 / NCIMB 947 / NCTC 947</strain>
    </source>
</reference>
<comment type="catalytic activity">
    <reaction evidence="1">
        <text>tRNA(Arg) + L-arginine + ATP = L-arginyl-tRNA(Arg) + AMP + diphosphate</text>
        <dbReference type="Rhea" id="RHEA:20301"/>
        <dbReference type="Rhea" id="RHEA-COMP:9658"/>
        <dbReference type="Rhea" id="RHEA-COMP:9673"/>
        <dbReference type="ChEBI" id="CHEBI:30616"/>
        <dbReference type="ChEBI" id="CHEBI:32682"/>
        <dbReference type="ChEBI" id="CHEBI:33019"/>
        <dbReference type="ChEBI" id="CHEBI:78442"/>
        <dbReference type="ChEBI" id="CHEBI:78513"/>
        <dbReference type="ChEBI" id="CHEBI:456215"/>
        <dbReference type="EC" id="6.1.1.19"/>
    </reaction>
</comment>
<comment type="subunit">
    <text evidence="1">Monomer.</text>
</comment>
<comment type="subcellular location">
    <subcellularLocation>
        <location evidence="1">Cytoplasm</location>
    </subcellularLocation>
</comment>
<comment type="similarity">
    <text evidence="1">Belongs to the class-I aminoacyl-tRNA synthetase family.</text>
</comment>
<feature type="chain" id="PRO_1000018047" description="Arginine--tRNA ligase">
    <location>
        <begin position="1"/>
        <end position="563"/>
    </location>
</feature>
<feature type="short sequence motif" description="'HIGH' region">
    <location>
        <begin position="122"/>
        <end position="132"/>
    </location>
</feature>
<keyword id="KW-0030">Aminoacyl-tRNA synthetase</keyword>
<keyword id="KW-0067">ATP-binding</keyword>
<keyword id="KW-0963">Cytoplasm</keyword>
<keyword id="KW-0436">Ligase</keyword>
<keyword id="KW-0547">Nucleotide-binding</keyword>
<keyword id="KW-0648">Protein biosynthesis</keyword>
<keyword id="KW-1185">Reference proteome</keyword>